<protein>
    <recommendedName>
        <fullName evidence="1">3-phosphoshikimate 1-carboxyvinyltransferase</fullName>
        <ecNumber evidence="1">2.5.1.19</ecNumber>
    </recommendedName>
    <alternativeName>
        <fullName evidence="1">5-enolpyruvylshikimate-3-phosphate synthase</fullName>
        <shortName evidence="1">EPSP synthase</shortName>
        <shortName evidence="1">EPSPS</shortName>
    </alternativeName>
</protein>
<evidence type="ECO:0000255" key="1">
    <source>
        <dbReference type="HAMAP-Rule" id="MF_00210"/>
    </source>
</evidence>
<evidence type="ECO:0000305" key="2"/>
<gene>
    <name evidence="1" type="primary">aroA</name>
</gene>
<organism>
    <name type="scientific">Shigella dysenteriae</name>
    <dbReference type="NCBI Taxonomy" id="622"/>
    <lineage>
        <taxon>Bacteria</taxon>
        <taxon>Pseudomonadati</taxon>
        <taxon>Pseudomonadota</taxon>
        <taxon>Gammaproteobacteria</taxon>
        <taxon>Enterobacterales</taxon>
        <taxon>Enterobacteriaceae</taxon>
        <taxon>Shigella</taxon>
    </lineage>
</organism>
<name>AROA_SHIDY</name>
<sequence>MESLTLQPIARVDGTINLPGSKSVSNRALLLAALAHGKTVLTNLLDSDDVRHMLNALAALGVSYTLSADRTRCEIIGNGGSLHAEGALELFLGNAGTAMRPLAAALCLGSNDIVLTGEPRMKERPIGHLVDALRLGRAKITYLEQENYPPLRLQGGFTGGNVDVDGSVSSQFLTALLMTAPLAPEDTVIRIKGDLVSKPYIDITLNLMKTFGVEIENQHYQQFVVKGGQSYQSPGTYLVEGDASSASYFLAAAAIKGGTVKVTGIGRNSMQGDIRFADVLEKMGATICWGDDYISCTRGELNAIDMDMNHIPDAAMTIATAALFAKGTTTLRNIYNWRVKETDRLFAMATELRKVGAEVEEGHDYIRITPPEKLNFAEIATYNDHRMAMCFSLVALSDTPVTILDPKCTAKTFPDYFEQLARISQAA</sequence>
<accession>O87006</accession>
<dbReference type="EC" id="2.5.1.19" evidence="1"/>
<dbReference type="EMBL" id="U82268">
    <property type="protein sequence ID" value="AAC32745.1"/>
    <property type="molecule type" value="Genomic_DNA"/>
</dbReference>
<dbReference type="SMR" id="O87006"/>
<dbReference type="UniPathway" id="UPA00053">
    <property type="reaction ID" value="UER00089"/>
</dbReference>
<dbReference type="GO" id="GO:0005737">
    <property type="term" value="C:cytoplasm"/>
    <property type="evidence" value="ECO:0007669"/>
    <property type="project" value="UniProtKB-SubCell"/>
</dbReference>
<dbReference type="GO" id="GO:0003866">
    <property type="term" value="F:3-phosphoshikimate 1-carboxyvinyltransferase activity"/>
    <property type="evidence" value="ECO:0007669"/>
    <property type="project" value="UniProtKB-UniRule"/>
</dbReference>
<dbReference type="GO" id="GO:0008652">
    <property type="term" value="P:amino acid biosynthetic process"/>
    <property type="evidence" value="ECO:0007669"/>
    <property type="project" value="UniProtKB-KW"/>
</dbReference>
<dbReference type="GO" id="GO:0009073">
    <property type="term" value="P:aromatic amino acid family biosynthetic process"/>
    <property type="evidence" value="ECO:0007669"/>
    <property type="project" value="UniProtKB-KW"/>
</dbReference>
<dbReference type="GO" id="GO:0009423">
    <property type="term" value="P:chorismate biosynthetic process"/>
    <property type="evidence" value="ECO:0007669"/>
    <property type="project" value="UniProtKB-UniRule"/>
</dbReference>
<dbReference type="CDD" id="cd01554">
    <property type="entry name" value="EPT-like"/>
    <property type="match status" value="1"/>
</dbReference>
<dbReference type="FunFam" id="3.65.10.10:FF:000003">
    <property type="entry name" value="3-phosphoshikimate 1-carboxyvinyltransferase"/>
    <property type="match status" value="1"/>
</dbReference>
<dbReference type="FunFam" id="3.65.10.10:FF:000004">
    <property type="entry name" value="3-phosphoshikimate 1-carboxyvinyltransferase"/>
    <property type="match status" value="1"/>
</dbReference>
<dbReference type="Gene3D" id="3.65.10.10">
    <property type="entry name" value="Enolpyruvate transferase domain"/>
    <property type="match status" value="2"/>
</dbReference>
<dbReference type="HAMAP" id="MF_00210">
    <property type="entry name" value="EPSP_synth"/>
    <property type="match status" value="1"/>
</dbReference>
<dbReference type="InterPro" id="IPR001986">
    <property type="entry name" value="Enolpyruvate_Tfrase_dom"/>
</dbReference>
<dbReference type="InterPro" id="IPR036968">
    <property type="entry name" value="Enolpyruvate_Tfrase_sf"/>
</dbReference>
<dbReference type="InterPro" id="IPR006264">
    <property type="entry name" value="EPSP_synthase"/>
</dbReference>
<dbReference type="InterPro" id="IPR023193">
    <property type="entry name" value="EPSP_synthase_CS"/>
</dbReference>
<dbReference type="InterPro" id="IPR013792">
    <property type="entry name" value="RNA3'P_cycl/enolpyr_Trfase_a/b"/>
</dbReference>
<dbReference type="NCBIfam" id="TIGR01356">
    <property type="entry name" value="aroA"/>
    <property type="match status" value="1"/>
</dbReference>
<dbReference type="PANTHER" id="PTHR21090">
    <property type="entry name" value="AROM/DEHYDROQUINATE SYNTHASE"/>
    <property type="match status" value="1"/>
</dbReference>
<dbReference type="PANTHER" id="PTHR21090:SF5">
    <property type="entry name" value="PENTAFUNCTIONAL AROM POLYPEPTIDE"/>
    <property type="match status" value="1"/>
</dbReference>
<dbReference type="Pfam" id="PF00275">
    <property type="entry name" value="EPSP_synthase"/>
    <property type="match status" value="1"/>
</dbReference>
<dbReference type="PIRSF" id="PIRSF000505">
    <property type="entry name" value="EPSPS"/>
    <property type="match status" value="1"/>
</dbReference>
<dbReference type="SUPFAM" id="SSF55205">
    <property type="entry name" value="EPT/RTPC-like"/>
    <property type="match status" value="1"/>
</dbReference>
<dbReference type="PROSITE" id="PS00104">
    <property type="entry name" value="EPSP_SYNTHASE_1"/>
    <property type="match status" value="1"/>
</dbReference>
<dbReference type="PROSITE" id="PS00885">
    <property type="entry name" value="EPSP_SYNTHASE_2"/>
    <property type="match status" value="1"/>
</dbReference>
<keyword id="KW-0028">Amino-acid biosynthesis</keyword>
<keyword id="KW-0057">Aromatic amino acid biosynthesis</keyword>
<keyword id="KW-0963">Cytoplasm</keyword>
<keyword id="KW-0808">Transferase</keyword>
<proteinExistence type="inferred from homology"/>
<reference key="1">
    <citation type="journal article" date="1997" name="Microbiol. Immunol.">
        <title>Cloning and characterisation of the aroA and aroD genes of Shigella dysenteriae type 1.</title>
        <authorList>
            <person name="Walker J.C."/>
            <person name="Verma N.K."/>
        </authorList>
    </citation>
    <scope>NUCLEOTIDE SEQUENCE [GENOMIC DNA]</scope>
</reference>
<feature type="chain" id="PRO_0000088288" description="3-phosphoshikimate 1-carboxyvinyltransferase">
    <location>
        <begin position="1"/>
        <end position="427"/>
    </location>
</feature>
<feature type="active site" description="Proton acceptor" evidence="1">
    <location>
        <position position="313"/>
    </location>
</feature>
<feature type="binding site" evidence="1">
    <location>
        <position position="22"/>
    </location>
    <ligand>
        <name>3-phosphoshikimate</name>
        <dbReference type="ChEBI" id="CHEBI:145989"/>
    </ligand>
</feature>
<feature type="binding site" evidence="1">
    <location>
        <position position="22"/>
    </location>
    <ligand>
        <name>phosphoenolpyruvate</name>
        <dbReference type="ChEBI" id="CHEBI:58702"/>
    </ligand>
</feature>
<feature type="binding site" evidence="1">
    <location>
        <position position="23"/>
    </location>
    <ligand>
        <name>3-phosphoshikimate</name>
        <dbReference type="ChEBI" id="CHEBI:145989"/>
    </ligand>
</feature>
<feature type="binding site" evidence="1">
    <location>
        <position position="27"/>
    </location>
    <ligand>
        <name>3-phosphoshikimate</name>
        <dbReference type="ChEBI" id="CHEBI:145989"/>
    </ligand>
</feature>
<feature type="binding site" evidence="1">
    <location>
        <position position="96"/>
    </location>
    <ligand>
        <name>phosphoenolpyruvate</name>
        <dbReference type="ChEBI" id="CHEBI:58702"/>
    </ligand>
</feature>
<feature type="binding site" evidence="1">
    <location>
        <position position="124"/>
    </location>
    <ligand>
        <name>phosphoenolpyruvate</name>
        <dbReference type="ChEBI" id="CHEBI:58702"/>
    </ligand>
</feature>
<feature type="binding site" evidence="1">
    <location>
        <position position="169"/>
    </location>
    <ligand>
        <name>3-phosphoshikimate</name>
        <dbReference type="ChEBI" id="CHEBI:145989"/>
    </ligand>
</feature>
<feature type="binding site" evidence="1">
    <location>
        <position position="170"/>
    </location>
    <ligand>
        <name>3-phosphoshikimate</name>
        <dbReference type="ChEBI" id="CHEBI:145989"/>
    </ligand>
</feature>
<feature type="binding site" evidence="1">
    <location>
        <position position="171"/>
    </location>
    <ligand>
        <name>3-phosphoshikimate</name>
        <dbReference type="ChEBI" id="CHEBI:145989"/>
    </ligand>
</feature>
<feature type="binding site" evidence="1">
    <location>
        <position position="171"/>
    </location>
    <ligand>
        <name>phosphoenolpyruvate</name>
        <dbReference type="ChEBI" id="CHEBI:58702"/>
    </ligand>
</feature>
<feature type="binding site" evidence="1">
    <location>
        <position position="197"/>
    </location>
    <ligand>
        <name>3-phosphoshikimate</name>
        <dbReference type="ChEBI" id="CHEBI:145989"/>
    </ligand>
</feature>
<feature type="binding site" evidence="1">
    <location>
        <position position="313"/>
    </location>
    <ligand>
        <name>3-phosphoshikimate</name>
        <dbReference type="ChEBI" id="CHEBI:145989"/>
    </ligand>
</feature>
<feature type="binding site" evidence="1">
    <location>
        <position position="336"/>
    </location>
    <ligand>
        <name>3-phosphoshikimate</name>
        <dbReference type="ChEBI" id="CHEBI:145989"/>
    </ligand>
</feature>
<feature type="binding site" evidence="1">
    <location>
        <position position="340"/>
    </location>
    <ligand>
        <name>3-phosphoshikimate</name>
        <dbReference type="ChEBI" id="CHEBI:145989"/>
    </ligand>
</feature>
<feature type="binding site" evidence="1">
    <location>
        <position position="344"/>
    </location>
    <ligand>
        <name>phosphoenolpyruvate</name>
        <dbReference type="ChEBI" id="CHEBI:58702"/>
    </ligand>
</feature>
<feature type="binding site" evidence="1">
    <location>
        <position position="386"/>
    </location>
    <ligand>
        <name>phosphoenolpyruvate</name>
        <dbReference type="ChEBI" id="CHEBI:58702"/>
    </ligand>
</feature>
<feature type="binding site" evidence="1">
    <location>
        <position position="411"/>
    </location>
    <ligand>
        <name>phosphoenolpyruvate</name>
        <dbReference type="ChEBI" id="CHEBI:58702"/>
    </ligand>
</feature>
<comment type="function">
    <text evidence="1">Catalyzes the transfer of the enolpyruvyl moiety of phosphoenolpyruvate (PEP) to the 5-hydroxyl of shikimate-3-phosphate (S3P) to produce enolpyruvyl shikimate-3-phosphate and inorganic phosphate.</text>
</comment>
<comment type="catalytic activity">
    <reaction evidence="1">
        <text>3-phosphoshikimate + phosphoenolpyruvate = 5-O-(1-carboxyvinyl)-3-phosphoshikimate + phosphate</text>
        <dbReference type="Rhea" id="RHEA:21256"/>
        <dbReference type="ChEBI" id="CHEBI:43474"/>
        <dbReference type="ChEBI" id="CHEBI:57701"/>
        <dbReference type="ChEBI" id="CHEBI:58702"/>
        <dbReference type="ChEBI" id="CHEBI:145989"/>
        <dbReference type="EC" id="2.5.1.19"/>
    </reaction>
    <physiologicalReaction direction="left-to-right" evidence="1">
        <dbReference type="Rhea" id="RHEA:21257"/>
    </physiologicalReaction>
</comment>
<comment type="pathway">
    <text evidence="1">Metabolic intermediate biosynthesis; chorismate biosynthesis; chorismate from D-erythrose 4-phosphate and phosphoenolpyruvate: step 6/7.</text>
</comment>
<comment type="subunit">
    <text evidence="1">Monomer.</text>
</comment>
<comment type="subcellular location">
    <subcellularLocation>
        <location evidence="1">Cytoplasm</location>
    </subcellularLocation>
</comment>
<comment type="similarity">
    <text evidence="1 2">Belongs to the EPSP synthase family.</text>
</comment>